<sequence length="295" mass="33684">MEHQLLCCEVETIRRAYPDANLLNDRVLRAMLKAEETCAPSVSYFKCVQKEVLPSMRKIVATWMLEVCEEQKCEEEVFPLAMNYLDRFLSLEPVKKSRLQLLGATCMFVASKMKETIPLTAEKLCIYTDNSIRPEELLQMELLLVNKLKWNLAALTPHDFIEHFLSKMPEAEENKQIIRKHAQTFVALCATDVKFISNPPSMVAAGSVVAAVQGLNLRSPNSFLSYYRLTRFLSRVIKCDPDCLRACQEQIEALLESSLRQAQQNMDPKAAEEEEEEEEEVDLACTPTDVRDVDI</sequence>
<proteinExistence type="evidence at transcript level"/>
<reference key="1">
    <citation type="submission" date="2004-11" db="EMBL/GenBank/DDBJ databases">
        <authorList>
            <consortium name="The German cDNA consortium"/>
        </authorList>
    </citation>
    <scope>NUCLEOTIDE SEQUENCE [LARGE SCALE MRNA]</scope>
    <source>
        <tissue>Kidney</tissue>
    </source>
</reference>
<name>CCND1_PONAB</name>
<evidence type="ECO:0000250" key="1">
    <source>
        <dbReference type="UniProtKB" id="P24385"/>
    </source>
</evidence>
<evidence type="ECO:0000250" key="2">
    <source>
        <dbReference type="UniProtKB" id="P25322"/>
    </source>
</evidence>
<evidence type="ECO:0000256" key="3">
    <source>
        <dbReference type="SAM" id="MobiDB-lite"/>
    </source>
</evidence>
<evidence type="ECO:0000305" key="4"/>
<gene>
    <name type="primary">CCND1</name>
</gene>
<accession>Q5R6J5</accession>
<protein>
    <recommendedName>
        <fullName>G1/S-specific cyclin-D1</fullName>
    </recommendedName>
</protein>
<organism>
    <name type="scientific">Pongo abelii</name>
    <name type="common">Sumatran orangutan</name>
    <name type="synonym">Pongo pygmaeus abelii</name>
    <dbReference type="NCBI Taxonomy" id="9601"/>
    <lineage>
        <taxon>Eukaryota</taxon>
        <taxon>Metazoa</taxon>
        <taxon>Chordata</taxon>
        <taxon>Craniata</taxon>
        <taxon>Vertebrata</taxon>
        <taxon>Euteleostomi</taxon>
        <taxon>Mammalia</taxon>
        <taxon>Eutheria</taxon>
        <taxon>Euarchontoglires</taxon>
        <taxon>Primates</taxon>
        <taxon>Haplorrhini</taxon>
        <taxon>Catarrhini</taxon>
        <taxon>Hominidae</taxon>
        <taxon>Pongo</taxon>
    </lineage>
</organism>
<dbReference type="EMBL" id="CR860494">
    <property type="protein sequence ID" value="CAH92615.1"/>
    <property type="molecule type" value="mRNA"/>
</dbReference>
<dbReference type="RefSeq" id="NP_001124773.1">
    <property type="nucleotide sequence ID" value="NM_001131301.1"/>
</dbReference>
<dbReference type="SMR" id="Q5R6J5"/>
<dbReference type="FunCoup" id="Q5R6J5">
    <property type="interactions" value="1993"/>
</dbReference>
<dbReference type="STRING" id="9601.ENSPPYP00000003434"/>
<dbReference type="Ensembl" id="ENSPPYT00000003557.3">
    <property type="protein sequence ID" value="ENSPPYP00000003434.3"/>
    <property type="gene ID" value="ENSPPYG00000002961.3"/>
</dbReference>
<dbReference type="GeneID" id="100171625"/>
<dbReference type="KEGG" id="pon:100171625"/>
<dbReference type="CTD" id="595"/>
<dbReference type="eggNOG" id="KOG0656">
    <property type="taxonomic scope" value="Eukaryota"/>
</dbReference>
<dbReference type="GeneTree" id="ENSGT00940000157816"/>
<dbReference type="InParanoid" id="Q5R6J5"/>
<dbReference type="OMA" id="PCELLQM"/>
<dbReference type="OrthoDB" id="306099at2759"/>
<dbReference type="Proteomes" id="UP000001595">
    <property type="component" value="Chromosome 11"/>
</dbReference>
<dbReference type="GO" id="GO:0005923">
    <property type="term" value="C:bicellular tight junction"/>
    <property type="evidence" value="ECO:0007669"/>
    <property type="project" value="Ensembl"/>
</dbReference>
<dbReference type="GO" id="GO:0097128">
    <property type="term" value="C:cyclin D1-CDK4 complex"/>
    <property type="evidence" value="ECO:0007669"/>
    <property type="project" value="Ensembl"/>
</dbReference>
<dbReference type="GO" id="GO:0097131">
    <property type="term" value="C:cyclin D1-CDK6 complex"/>
    <property type="evidence" value="ECO:0007669"/>
    <property type="project" value="Ensembl"/>
</dbReference>
<dbReference type="GO" id="GO:0000307">
    <property type="term" value="C:cyclin-dependent protein kinase holoenzyme complex"/>
    <property type="evidence" value="ECO:0000250"/>
    <property type="project" value="UniProtKB"/>
</dbReference>
<dbReference type="GO" id="GO:0005737">
    <property type="term" value="C:cytoplasm"/>
    <property type="evidence" value="ECO:0007669"/>
    <property type="project" value="UniProtKB-SubCell"/>
</dbReference>
<dbReference type="GO" id="GO:0031965">
    <property type="term" value="C:nuclear membrane"/>
    <property type="evidence" value="ECO:0007669"/>
    <property type="project" value="UniProtKB-SubCell"/>
</dbReference>
<dbReference type="GO" id="GO:0005654">
    <property type="term" value="C:nucleoplasm"/>
    <property type="evidence" value="ECO:0007669"/>
    <property type="project" value="Ensembl"/>
</dbReference>
<dbReference type="GO" id="GO:0005634">
    <property type="term" value="C:nucleus"/>
    <property type="evidence" value="ECO:0000250"/>
    <property type="project" value="UniProtKB"/>
</dbReference>
<dbReference type="GO" id="GO:0017053">
    <property type="term" value="C:transcription repressor complex"/>
    <property type="evidence" value="ECO:0000250"/>
    <property type="project" value="UniProtKB"/>
</dbReference>
<dbReference type="GO" id="GO:0061575">
    <property type="term" value="F:cyclin-dependent protein serine/threonine kinase activator activity"/>
    <property type="evidence" value="ECO:0007669"/>
    <property type="project" value="Ensembl"/>
</dbReference>
<dbReference type="GO" id="GO:0042826">
    <property type="term" value="F:histone deacetylase binding"/>
    <property type="evidence" value="ECO:0007669"/>
    <property type="project" value="Ensembl"/>
</dbReference>
<dbReference type="GO" id="GO:0070064">
    <property type="term" value="F:proline-rich region binding"/>
    <property type="evidence" value="ECO:0007669"/>
    <property type="project" value="Ensembl"/>
</dbReference>
<dbReference type="GO" id="GO:0004672">
    <property type="term" value="F:protein kinase activity"/>
    <property type="evidence" value="ECO:0007669"/>
    <property type="project" value="Ensembl"/>
</dbReference>
<dbReference type="GO" id="GO:0019901">
    <property type="term" value="F:protein kinase binding"/>
    <property type="evidence" value="ECO:0007669"/>
    <property type="project" value="Ensembl"/>
</dbReference>
<dbReference type="GO" id="GO:0043539">
    <property type="term" value="F:protein serine/threonine kinase activator activity"/>
    <property type="evidence" value="ECO:0000250"/>
    <property type="project" value="UniProtKB"/>
</dbReference>
<dbReference type="GO" id="GO:0003714">
    <property type="term" value="F:transcription corepressor activity"/>
    <property type="evidence" value="ECO:0000250"/>
    <property type="project" value="UniProtKB"/>
</dbReference>
<dbReference type="GO" id="GO:0051301">
    <property type="term" value="P:cell division"/>
    <property type="evidence" value="ECO:0007669"/>
    <property type="project" value="UniProtKB-KW"/>
</dbReference>
<dbReference type="GO" id="GO:0006974">
    <property type="term" value="P:DNA damage response"/>
    <property type="evidence" value="ECO:0000250"/>
    <property type="project" value="UniProtKB"/>
</dbReference>
<dbReference type="GO" id="GO:0030968">
    <property type="term" value="P:endoplasmic reticulum unfolded protein response"/>
    <property type="evidence" value="ECO:0007669"/>
    <property type="project" value="Ensembl"/>
</dbReference>
<dbReference type="GO" id="GO:0045444">
    <property type="term" value="P:fat cell differentiation"/>
    <property type="evidence" value="ECO:0007669"/>
    <property type="project" value="Ensembl"/>
</dbReference>
<dbReference type="GO" id="GO:0000082">
    <property type="term" value="P:G1/S transition of mitotic cell cycle"/>
    <property type="evidence" value="ECO:0000250"/>
    <property type="project" value="UniProtKB"/>
</dbReference>
<dbReference type="GO" id="GO:0007595">
    <property type="term" value="P:lactation"/>
    <property type="evidence" value="ECO:0007669"/>
    <property type="project" value="Ensembl"/>
</dbReference>
<dbReference type="GO" id="GO:0097421">
    <property type="term" value="P:liver regeneration"/>
    <property type="evidence" value="ECO:0007669"/>
    <property type="project" value="Ensembl"/>
</dbReference>
<dbReference type="GO" id="GO:0060749">
    <property type="term" value="P:mammary gland alveolus development"/>
    <property type="evidence" value="ECO:0007669"/>
    <property type="project" value="Ensembl"/>
</dbReference>
<dbReference type="GO" id="GO:0033598">
    <property type="term" value="P:mammary gland epithelial cell proliferation"/>
    <property type="evidence" value="ECO:0007669"/>
    <property type="project" value="Ensembl"/>
</dbReference>
<dbReference type="GO" id="GO:0031571">
    <property type="term" value="P:mitotic G1 DNA damage checkpoint signaling"/>
    <property type="evidence" value="ECO:0000250"/>
    <property type="project" value="UniProtKB"/>
</dbReference>
<dbReference type="GO" id="GO:0030857">
    <property type="term" value="P:negative regulation of epithelial cell differentiation"/>
    <property type="evidence" value="ECO:0007669"/>
    <property type="project" value="Ensembl"/>
</dbReference>
<dbReference type="GO" id="GO:0043524">
    <property type="term" value="P:negative regulation of neuron apoptotic process"/>
    <property type="evidence" value="ECO:0007669"/>
    <property type="project" value="Ensembl"/>
</dbReference>
<dbReference type="GO" id="GO:0000122">
    <property type="term" value="P:negative regulation of transcription by RNA polymerase II"/>
    <property type="evidence" value="ECO:0000250"/>
    <property type="project" value="UniProtKB"/>
</dbReference>
<dbReference type="GO" id="GO:0030182">
    <property type="term" value="P:neuron differentiation"/>
    <property type="evidence" value="ECO:0007669"/>
    <property type="project" value="Ensembl"/>
</dbReference>
<dbReference type="GO" id="GO:0010971">
    <property type="term" value="P:positive regulation of G2/M transition of mitotic cell cycle"/>
    <property type="evidence" value="ECO:0000250"/>
    <property type="project" value="UniProtKB"/>
</dbReference>
<dbReference type="GO" id="GO:0033601">
    <property type="term" value="P:positive regulation of mammary gland epithelial cell proliferation"/>
    <property type="evidence" value="ECO:0007669"/>
    <property type="project" value="Ensembl"/>
</dbReference>
<dbReference type="GO" id="GO:0000320">
    <property type="term" value="P:re-entry into mitotic cell cycle"/>
    <property type="evidence" value="ECO:0007669"/>
    <property type="project" value="Ensembl"/>
</dbReference>
<dbReference type="GO" id="GO:0044321">
    <property type="term" value="P:response to leptin"/>
    <property type="evidence" value="ECO:0007669"/>
    <property type="project" value="Ensembl"/>
</dbReference>
<dbReference type="GO" id="GO:0070141">
    <property type="term" value="P:response to UV-A"/>
    <property type="evidence" value="ECO:0000250"/>
    <property type="project" value="UniProtKB"/>
</dbReference>
<dbReference type="GO" id="GO:0009410">
    <property type="term" value="P:response to xenobiotic stimulus"/>
    <property type="evidence" value="ECO:0007669"/>
    <property type="project" value="Ensembl"/>
</dbReference>
<dbReference type="GO" id="GO:0016055">
    <property type="term" value="P:Wnt signaling pathway"/>
    <property type="evidence" value="ECO:0007669"/>
    <property type="project" value="Ensembl"/>
</dbReference>
<dbReference type="CDD" id="cd20573">
    <property type="entry name" value="CYCLIN_CCND1_rpt1"/>
    <property type="match status" value="1"/>
</dbReference>
<dbReference type="CDD" id="cd20576">
    <property type="entry name" value="CYCLIN_CCND1_rpt2"/>
    <property type="match status" value="1"/>
</dbReference>
<dbReference type="FunFam" id="1.10.472.10:FF:000120">
    <property type="entry name" value="G1/S-specific cyclin-D1"/>
    <property type="match status" value="1"/>
</dbReference>
<dbReference type="Gene3D" id="1.10.472.10">
    <property type="entry name" value="Cyclin-like"/>
    <property type="match status" value="2"/>
</dbReference>
<dbReference type="InterPro" id="IPR039361">
    <property type="entry name" value="Cyclin"/>
</dbReference>
<dbReference type="InterPro" id="IPR013763">
    <property type="entry name" value="Cyclin-like_dom"/>
</dbReference>
<dbReference type="InterPro" id="IPR036915">
    <property type="entry name" value="Cyclin-like_sf"/>
</dbReference>
<dbReference type="InterPro" id="IPR004367">
    <property type="entry name" value="Cyclin_C-dom"/>
</dbReference>
<dbReference type="InterPro" id="IPR006671">
    <property type="entry name" value="Cyclin_N"/>
</dbReference>
<dbReference type="InterPro" id="IPR048258">
    <property type="entry name" value="Cyclins_cyclin-box"/>
</dbReference>
<dbReference type="PANTHER" id="PTHR10177">
    <property type="entry name" value="CYCLINS"/>
    <property type="match status" value="1"/>
</dbReference>
<dbReference type="Pfam" id="PF02984">
    <property type="entry name" value="Cyclin_C"/>
    <property type="match status" value="1"/>
</dbReference>
<dbReference type="Pfam" id="PF00134">
    <property type="entry name" value="Cyclin_N"/>
    <property type="match status" value="1"/>
</dbReference>
<dbReference type="SMART" id="SM00385">
    <property type="entry name" value="CYCLIN"/>
    <property type="match status" value="1"/>
</dbReference>
<dbReference type="SMART" id="SM01332">
    <property type="entry name" value="Cyclin_C"/>
    <property type="match status" value="1"/>
</dbReference>
<dbReference type="SUPFAM" id="SSF47954">
    <property type="entry name" value="Cyclin-like"/>
    <property type="match status" value="2"/>
</dbReference>
<dbReference type="PROSITE" id="PS00292">
    <property type="entry name" value="CYCLINS"/>
    <property type="match status" value="1"/>
</dbReference>
<feature type="chain" id="PRO_0000080432" description="G1/S-specific cyclin-D1">
    <location>
        <begin position="1"/>
        <end position="295"/>
    </location>
</feature>
<feature type="domain" description="Cyclin N-terminal">
    <location>
        <begin position="28"/>
        <end position="152"/>
    </location>
</feature>
<feature type="region of interest" description="Disordered" evidence="3">
    <location>
        <begin position="262"/>
        <end position="295"/>
    </location>
</feature>
<feature type="compositionally biased region" description="Acidic residues" evidence="3">
    <location>
        <begin position="272"/>
        <end position="282"/>
    </location>
</feature>
<feature type="modified residue" description="Phosphothreonine" evidence="1">
    <location>
        <position position="286"/>
    </location>
</feature>
<feature type="cross-link" description="Glycyl lysine isopeptide (Lys-Gly) (interchain with G-Cter in ubiquitin)" evidence="2">
    <location>
        <position position="269"/>
    </location>
</feature>
<keyword id="KW-0131">Cell cycle</keyword>
<keyword id="KW-0132">Cell division</keyword>
<keyword id="KW-0195">Cyclin</keyword>
<keyword id="KW-0963">Cytoplasm</keyword>
<keyword id="KW-1017">Isopeptide bond</keyword>
<keyword id="KW-0472">Membrane</keyword>
<keyword id="KW-0539">Nucleus</keyword>
<keyword id="KW-0597">Phosphoprotein</keyword>
<keyword id="KW-1185">Reference proteome</keyword>
<keyword id="KW-0678">Repressor</keyword>
<keyword id="KW-0804">Transcription</keyword>
<keyword id="KW-0805">Transcription regulation</keyword>
<keyword id="KW-0832">Ubl conjugation</keyword>
<comment type="function">
    <text evidence="1">Regulatory component of the cyclin D1-CDK4 (DC) complex that phosphorylates and inhibits members of the retinoblastoma (RB) protein family including RB1 and regulates the cell-cycle during G(1)/S transition. Phosphorylation of RB1 allows dissociation of the transcription factor E2F from the RB/E2F complex and the subsequent transcription of E2F target genes which are responsible for the progression through the G(1) phase. Hypophosphorylates RB1 in early G(1) phase. Cyclin D-CDK4 complexes are major integrators of various mitogenenic and antimitogenic signals. Also a substrate for SMAD3, phosphorylating SMAD3 in a cell-cycle-dependent manner and repressing its transcriptional activity. Component of the ternary complex, cyclin D1/CDK4/CDKN1B, required for nuclear translocation and activity of the cyclin D-CDK4 complex. Exhibits transcriptional corepressor activity with INSM1 on the NEUROD1 and INS promoters in a cell cycle-independent manner.</text>
</comment>
<comment type="subunit">
    <text evidence="1 2">Interacts with either CDK4 or CDK6 protein kinase to form a serine/threonine kinase holoenzyme complex. The cyclin subunit imparts substrate specificity to the complex. Component of the ternary complex CCND1/CDK4/CDKN1B required for nuclear translocation and modulation of CDK4-mediated kinase activity (By similarity). Interacts directly with CDKN1B. Can form similar complexes with either CDKN1A or CDKN2A. Interacts with UHRF2; the interaction ubiquitinates CCND1 and appears to occur independently of phosphorylation. Interacts with USP2. Interacts (via cyclin N-terminal domain) with INSM1 (via N-terminal region); the interaction competes with the binding of CCND1 to CDK4 during cell cycle progression and inhibits CDK4 activity. Interacts with CDK4; the interaction is prevented with the binding of CCND1 to INSM1 during cell cycle progression (By similarity).</text>
</comment>
<comment type="subcellular location">
    <subcellularLocation>
        <location evidence="1">Nucleus</location>
    </subcellularLocation>
    <subcellularLocation>
        <location evidence="1">Cytoplasm</location>
    </subcellularLocation>
    <subcellularLocation>
        <location evidence="1">Nucleus membrane</location>
    </subcellularLocation>
    <text evidence="1">Cyclin D-CDK4 complexes accumulate at the nuclear membrane and are then translocated into the nucleus through interaction with KIP/CIP family members.</text>
</comment>
<comment type="PTM">
    <text evidence="1">Phosphorylation at Thr-286 by MAP kinases is required for ubiquitination and degradation by the DCX(AMBRA1) complex. It also plays an essential role for recognition by the FBXO31 component of SCF (SKP1-cullin-F-box) protein ligase complex following DNA damage.</text>
</comment>
<comment type="PTM">
    <text evidence="1 2">Ubiquitinated at Lys-269 by the DCX(AMBRA1) complex during the transition from G1 to S cell phase, leading to its degradation: ubiquitination is dependent on Thr-286 phosphorylation. The DCX(AMBRA1) complex represents the major regulator of CCND1 stability during the G1/S transition (By similarity). Also ubiquitinated by the SCF(FBXO4) and Cul7-RING(FBXW8) ubiquitin-protein ligase complexes (By similarity). Following DNA damage it is ubiquitinated by the SCF(FBXO31) protein ligase complex. SCF(FBXO31) ubiquitination is dependent on Thr-286 phosphorylation. Ubiquitinated also by UHRF2 apparently in a phosphorylation-independent manner. Ubiquitination leads to its degradation and G1 arrest. Deubiquitinated by USP2; leading to its stabilization (By similarity).</text>
</comment>
<comment type="similarity">
    <text evidence="4">Belongs to the cyclin family. Cyclin D subfamily.</text>
</comment>